<sequence>MEEFQRYLELDRFRQHDFLYPLLFREYIYALAHDHGFNSYMLLENIGYDNKSSLLIVKRLITRMYQHNYLMISANDSNQNPFFGYNKNLHSQIISEGFAVIVEIPFSLRLISSFEGAEIVISYKLRSIHSIFPFLEDKLPHLNYTTDVRIPYPIHLEILIQTLRSRVKDASYLHLLRFFLHQYSNWNILIITTKSISIFSKSNPRFFLFLYNSHICQYESIFLFLGNQSSHLRLISSGVLFERLYLHKKIEHFAEVFANDFPVIPCFLKDPFMHYVRYQGKSILASKDTPLLMNKWKYYLVNLWQCHFYVWSHPGRIHINQLSKHSLDFWGYFSSVRLNPSVVRSQMLENSFLINNAPKKLDIIVPIIPLIGSLAKARFCNALGHPISKLTRADLSDFEILNRFLRICRNLSHYYSGSSKKKSMYRIKYILRLSCVKTLARKHKSTARAFLKKVGSEFVQEFFTEEEEFLSLIFPRTSFTLRRLYRGRVWYLDIIFINGLANHE</sequence>
<geneLocation type="chloroplast"/>
<comment type="function">
    <text evidence="1">Usually encoded in the trnK tRNA gene intron. Probably assists in splicing its own and other chloroplast group II introns.</text>
</comment>
<comment type="subcellular location">
    <subcellularLocation>
        <location>Plastid</location>
        <location>Chloroplast</location>
    </subcellularLocation>
</comment>
<comment type="similarity">
    <text evidence="1">Belongs to the intron maturase 2 family. MatK subfamily.</text>
</comment>
<evidence type="ECO:0000255" key="1">
    <source>
        <dbReference type="HAMAP-Rule" id="MF_01390"/>
    </source>
</evidence>
<gene>
    <name evidence="1" type="primary">matK</name>
</gene>
<proteinExistence type="inferred from homology"/>
<protein>
    <recommendedName>
        <fullName evidence="1">Maturase K</fullName>
    </recommendedName>
    <alternativeName>
        <fullName evidence="1">Intron maturase</fullName>
    </alternativeName>
</protein>
<feature type="chain" id="PRO_0000143387" description="Maturase K">
    <location>
        <begin position="1"/>
        <end position="504"/>
    </location>
</feature>
<reference key="1">
    <citation type="submission" date="2000-07" db="EMBL/GenBank/DDBJ databases">
        <title>Chloroplast DNA phylogeography of the common beech (Fagus crenata Blume) in Japan.</title>
        <authorList>
            <person name="Fujii N."/>
            <person name="Tomaru N."/>
            <person name="Okuyama K."/>
            <person name="Koike T."/>
            <person name="Mikami T."/>
            <person name="Ueda K."/>
        </authorList>
    </citation>
    <scope>NUCLEOTIDE SEQUENCE [GENOMIC DNA]</scope>
</reference>
<accession>Q8WKE7</accession>
<dbReference type="EMBL" id="AB046505">
    <property type="protein sequence ID" value="BAB84004.1"/>
    <property type="molecule type" value="Genomic_DNA"/>
</dbReference>
<dbReference type="GO" id="GO:0009507">
    <property type="term" value="C:chloroplast"/>
    <property type="evidence" value="ECO:0007669"/>
    <property type="project" value="UniProtKB-SubCell"/>
</dbReference>
<dbReference type="GO" id="GO:0003723">
    <property type="term" value="F:RNA binding"/>
    <property type="evidence" value="ECO:0007669"/>
    <property type="project" value="UniProtKB-KW"/>
</dbReference>
<dbReference type="GO" id="GO:0006397">
    <property type="term" value="P:mRNA processing"/>
    <property type="evidence" value="ECO:0007669"/>
    <property type="project" value="UniProtKB-KW"/>
</dbReference>
<dbReference type="GO" id="GO:0008380">
    <property type="term" value="P:RNA splicing"/>
    <property type="evidence" value="ECO:0007669"/>
    <property type="project" value="UniProtKB-UniRule"/>
</dbReference>
<dbReference type="GO" id="GO:0008033">
    <property type="term" value="P:tRNA processing"/>
    <property type="evidence" value="ECO:0007669"/>
    <property type="project" value="UniProtKB-KW"/>
</dbReference>
<dbReference type="HAMAP" id="MF_01390">
    <property type="entry name" value="MatK"/>
    <property type="match status" value="1"/>
</dbReference>
<dbReference type="InterPro" id="IPR024937">
    <property type="entry name" value="Domain_X"/>
</dbReference>
<dbReference type="InterPro" id="IPR002866">
    <property type="entry name" value="Maturase_MatK"/>
</dbReference>
<dbReference type="InterPro" id="IPR024942">
    <property type="entry name" value="Maturase_MatK_N"/>
</dbReference>
<dbReference type="PANTHER" id="PTHR34811">
    <property type="entry name" value="MATURASE K"/>
    <property type="match status" value="1"/>
</dbReference>
<dbReference type="PANTHER" id="PTHR34811:SF1">
    <property type="entry name" value="MATURASE K"/>
    <property type="match status" value="1"/>
</dbReference>
<dbReference type="Pfam" id="PF01348">
    <property type="entry name" value="Intron_maturas2"/>
    <property type="match status" value="1"/>
</dbReference>
<dbReference type="Pfam" id="PF01824">
    <property type="entry name" value="MatK_N"/>
    <property type="match status" value="1"/>
</dbReference>
<name>MATK_FAGJA</name>
<organism>
    <name type="scientific">Fagus japonica</name>
    <name type="common">Japanese beech</name>
    <dbReference type="NCBI Taxonomy" id="63422"/>
    <lineage>
        <taxon>Eukaryota</taxon>
        <taxon>Viridiplantae</taxon>
        <taxon>Streptophyta</taxon>
        <taxon>Embryophyta</taxon>
        <taxon>Tracheophyta</taxon>
        <taxon>Spermatophyta</taxon>
        <taxon>Magnoliopsida</taxon>
        <taxon>eudicotyledons</taxon>
        <taxon>Gunneridae</taxon>
        <taxon>Pentapetalae</taxon>
        <taxon>rosids</taxon>
        <taxon>fabids</taxon>
        <taxon>Fagales</taxon>
        <taxon>Fagaceae</taxon>
        <taxon>Fagus</taxon>
    </lineage>
</organism>
<keyword id="KW-0150">Chloroplast</keyword>
<keyword id="KW-0507">mRNA processing</keyword>
<keyword id="KW-0934">Plastid</keyword>
<keyword id="KW-0694">RNA-binding</keyword>
<keyword id="KW-0819">tRNA processing</keyword>